<sequence>MIVAHNLGFPRIGGQRELKWALESYWKEQLGQQELIQVTRELRALHWKQQQEAGLDLVPVGDFSWYDQVLDMSALLGVVPPRFGEIQDEVDLDTYFCMARGRAPGKKEVAACEMTKWFNTNYHYIVPEFQPQQAFRLASSTLFNQVAEAQALDFPIKPVLLGPLSFLWLGKSKGSTFDKLSLLDALLPVYGQVLHRLKTQGVEWVQIDEPILVLDLPPDWKAAFERAYSSLVNGGPKRLLATYFGALGDNTRLACQLPVEGLHIDLVSAPEQLAKVLDEFPSYKILSAGLVDGRNIWRNDLEASLAQLEALRERLDDRLWIAPSCSLLHSPMDLALESALDEELKSWLAFAVQKIEEVATLKRALVEGRDVVAQALADSAAAQASRRQSERIYRPEIRARMTEVNEDMTRRRHKYPVRAQVQREELKLPLYPTTTIGSFPQTPDIRKARRDFKAGRIAEPEYRRQMEAEIARAIQAQESYGLDVLVHGEAERNDMVEYFGEQLEGFAFTQNGWVQSYGSRCVKPPIIYGDVVRRQPMTVAWLRYAQSLTSRRVKGMLTGPVTLLQWSFVRDDQPRADTCLQLALVLRDEVRDLEQADIKLIQVDEPAFREGLPLRRVEWESYLAWAVRCFRVASSGVEDGTQIHTHMCYSEFNDIIHAIAALDADVITIETSRSDGELLAAFAAFEYPNEIGPGVYDIHSPVVPTEAQIVGLIKKAAEYIPAERLWVNPDCGLKTRAWPEVETALRTMVAAAHGLRSA</sequence>
<protein>
    <recommendedName>
        <fullName evidence="1">5-methyltetrahydropteroyltriglutamate--homocysteine methyltransferase</fullName>
        <ecNumber evidence="1">2.1.1.14</ecNumber>
    </recommendedName>
    <alternativeName>
        <fullName evidence="1">Cobalamin-independent methionine synthase</fullName>
    </alternativeName>
    <alternativeName>
        <fullName evidence="1">Methionine synthase, vitamin-B12 independent isozyme</fullName>
    </alternativeName>
</protein>
<feature type="chain" id="PRO_1000017259" description="5-methyltetrahydropteroyltriglutamate--homocysteine methyltransferase">
    <location>
        <begin position="1"/>
        <end position="758"/>
    </location>
</feature>
<feature type="active site" description="Proton donor" evidence="1">
    <location>
        <position position="699"/>
    </location>
</feature>
<feature type="binding site" evidence="1">
    <location>
        <begin position="16"/>
        <end position="19"/>
    </location>
    <ligand>
        <name>5-methyltetrahydropteroyltri-L-glutamate</name>
        <dbReference type="ChEBI" id="CHEBI:58207"/>
    </ligand>
</feature>
<feature type="binding site" evidence="1">
    <location>
        <position position="116"/>
    </location>
    <ligand>
        <name>5-methyltetrahydropteroyltri-L-glutamate</name>
        <dbReference type="ChEBI" id="CHEBI:58207"/>
    </ligand>
</feature>
<feature type="binding site" evidence="1">
    <location>
        <begin position="436"/>
        <end position="438"/>
    </location>
    <ligand>
        <name>L-homocysteine</name>
        <dbReference type="ChEBI" id="CHEBI:58199"/>
    </ligand>
</feature>
<feature type="binding site" evidence="1">
    <location>
        <begin position="436"/>
        <end position="438"/>
    </location>
    <ligand>
        <name>L-methionine</name>
        <dbReference type="ChEBI" id="CHEBI:57844"/>
    </ligand>
</feature>
<feature type="binding site" evidence="1">
    <location>
        <position position="489"/>
    </location>
    <ligand>
        <name>L-homocysteine</name>
        <dbReference type="ChEBI" id="CHEBI:58199"/>
    </ligand>
</feature>
<feature type="binding site" evidence="1">
    <location>
        <position position="489"/>
    </location>
    <ligand>
        <name>L-methionine</name>
        <dbReference type="ChEBI" id="CHEBI:57844"/>
    </ligand>
</feature>
<feature type="binding site" evidence="1">
    <location>
        <begin position="520"/>
        <end position="521"/>
    </location>
    <ligand>
        <name>5-methyltetrahydropteroyltri-L-glutamate</name>
        <dbReference type="ChEBI" id="CHEBI:58207"/>
    </ligand>
</feature>
<feature type="binding site" evidence="1">
    <location>
        <position position="566"/>
    </location>
    <ligand>
        <name>5-methyltetrahydropteroyltri-L-glutamate</name>
        <dbReference type="ChEBI" id="CHEBI:58207"/>
    </ligand>
</feature>
<feature type="binding site" evidence="1">
    <location>
        <position position="604"/>
    </location>
    <ligand>
        <name>L-homocysteine</name>
        <dbReference type="ChEBI" id="CHEBI:58199"/>
    </ligand>
</feature>
<feature type="binding site" evidence="1">
    <location>
        <position position="604"/>
    </location>
    <ligand>
        <name>L-methionine</name>
        <dbReference type="ChEBI" id="CHEBI:57844"/>
    </ligand>
</feature>
<feature type="binding site" evidence="1">
    <location>
        <position position="610"/>
    </location>
    <ligand>
        <name>5-methyltetrahydropteroyltri-L-glutamate</name>
        <dbReference type="ChEBI" id="CHEBI:58207"/>
    </ligand>
</feature>
<feature type="binding site" evidence="1">
    <location>
        <position position="646"/>
    </location>
    <ligand>
        <name>Zn(2+)</name>
        <dbReference type="ChEBI" id="CHEBI:29105"/>
        <note>catalytic</note>
    </ligand>
</feature>
<feature type="binding site" evidence="1">
    <location>
        <position position="648"/>
    </location>
    <ligand>
        <name>Zn(2+)</name>
        <dbReference type="ChEBI" id="CHEBI:29105"/>
        <note>catalytic</note>
    </ligand>
</feature>
<feature type="binding site" evidence="1">
    <location>
        <position position="670"/>
    </location>
    <ligand>
        <name>Zn(2+)</name>
        <dbReference type="ChEBI" id="CHEBI:29105"/>
        <note>catalytic</note>
    </ligand>
</feature>
<feature type="binding site" evidence="1">
    <location>
        <position position="731"/>
    </location>
    <ligand>
        <name>Zn(2+)</name>
        <dbReference type="ChEBI" id="CHEBI:29105"/>
        <note>catalytic</note>
    </ligand>
</feature>
<comment type="function">
    <text evidence="1">Catalyzes the transfer of a methyl group from 5-methyltetrahydrofolate to homocysteine resulting in methionine formation.</text>
</comment>
<comment type="catalytic activity">
    <reaction evidence="1">
        <text>5-methyltetrahydropteroyltri-L-glutamate + L-homocysteine = tetrahydropteroyltri-L-glutamate + L-methionine</text>
        <dbReference type="Rhea" id="RHEA:21196"/>
        <dbReference type="ChEBI" id="CHEBI:57844"/>
        <dbReference type="ChEBI" id="CHEBI:58140"/>
        <dbReference type="ChEBI" id="CHEBI:58199"/>
        <dbReference type="ChEBI" id="CHEBI:58207"/>
        <dbReference type="EC" id="2.1.1.14"/>
    </reaction>
</comment>
<comment type="cofactor">
    <cofactor evidence="1">
        <name>Zn(2+)</name>
        <dbReference type="ChEBI" id="CHEBI:29105"/>
    </cofactor>
    <text evidence="1">Binds 1 zinc ion per subunit.</text>
</comment>
<comment type="pathway">
    <text evidence="1">Amino-acid biosynthesis; L-methionine biosynthesis via de novo pathway; L-methionine from L-homocysteine (MetE route): step 1/1.</text>
</comment>
<comment type="similarity">
    <text evidence="1">Belongs to the vitamin-B12 independent methionine synthase family.</text>
</comment>
<keyword id="KW-0028">Amino-acid biosynthesis</keyword>
<keyword id="KW-0479">Metal-binding</keyword>
<keyword id="KW-0486">Methionine biosynthesis</keyword>
<keyword id="KW-0489">Methyltransferase</keyword>
<keyword id="KW-1185">Reference proteome</keyword>
<keyword id="KW-0677">Repeat</keyword>
<keyword id="KW-0808">Transferase</keyword>
<keyword id="KW-0862">Zinc</keyword>
<proteinExistence type="inferred from homology"/>
<dbReference type="EC" id="2.1.1.14" evidence="1"/>
<dbReference type="EMBL" id="CP000127">
    <property type="protein sequence ID" value="ABA58211.1"/>
    <property type="molecule type" value="Genomic_DNA"/>
</dbReference>
<dbReference type="RefSeq" id="WP_011330745.1">
    <property type="nucleotide sequence ID" value="NC_007484.1"/>
</dbReference>
<dbReference type="SMR" id="Q3JAD5"/>
<dbReference type="FunCoup" id="Q3JAD5">
    <property type="interactions" value="369"/>
</dbReference>
<dbReference type="STRING" id="323261.Noc_1739"/>
<dbReference type="KEGG" id="noc:Noc_1739"/>
<dbReference type="eggNOG" id="COG0620">
    <property type="taxonomic scope" value="Bacteria"/>
</dbReference>
<dbReference type="HOGENOM" id="CLU_013175_0_0_6"/>
<dbReference type="InParanoid" id="Q3JAD5"/>
<dbReference type="UniPathway" id="UPA00051">
    <property type="reaction ID" value="UER00082"/>
</dbReference>
<dbReference type="Proteomes" id="UP000006838">
    <property type="component" value="Chromosome"/>
</dbReference>
<dbReference type="GO" id="GO:0003871">
    <property type="term" value="F:5-methyltetrahydropteroyltriglutamate-homocysteine S-methyltransferase activity"/>
    <property type="evidence" value="ECO:0007669"/>
    <property type="project" value="UniProtKB-UniRule"/>
</dbReference>
<dbReference type="GO" id="GO:0008270">
    <property type="term" value="F:zinc ion binding"/>
    <property type="evidence" value="ECO:0007669"/>
    <property type="project" value="InterPro"/>
</dbReference>
<dbReference type="GO" id="GO:0009086">
    <property type="term" value="P:methionine biosynthetic process"/>
    <property type="evidence" value="ECO:0007669"/>
    <property type="project" value="UniProtKB-UniRule"/>
</dbReference>
<dbReference type="GO" id="GO:0032259">
    <property type="term" value="P:methylation"/>
    <property type="evidence" value="ECO:0007669"/>
    <property type="project" value="UniProtKB-KW"/>
</dbReference>
<dbReference type="CDD" id="cd03311">
    <property type="entry name" value="CIMS_C_terminal_like"/>
    <property type="match status" value="1"/>
</dbReference>
<dbReference type="CDD" id="cd03312">
    <property type="entry name" value="CIMS_N_terminal_like"/>
    <property type="match status" value="1"/>
</dbReference>
<dbReference type="FunFam" id="3.20.20.210:FF:000002">
    <property type="entry name" value="5-methyltetrahydropteroyltriglutamate--homocysteine methyltransferase"/>
    <property type="match status" value="1"/>
</dbReference>
<dbReference type="FunFam" id="3.20.20.210:FF:000003">
    <property type="entry name" value="5-methyltetrahydropteroyltriglutamate--homocysteine methyltransferase"/>
    <property type="match status" value="1"/>
</dbReference>
<dbReference type="Gene3D" id="3.20.20.210">
    <property type="match status" value="2"/>
</dbReference>
<dbReference type="HAMAP" id="MF_00172">
    <property type="entry name" value="Meth_synth"/>
    <property type="match status" value="1"/>
</dbReference>
<dbReference type="InterPro" id="IPR013215">
    <property type="entry name" value="Cbl-indep_Met_Synth_N"/>
</dbReference>
<dbReference type="InterPro" id="IPR006276">
    <property type="entry name" value="Cobalamin-indep_Met_synthase"/>
</dbReference>
<dbReference type="InterPro" id="IPR002629">
    <property type="entry name" value="Met_Synth_C/arc"/>
</dbReference>
<dbReference type="InterPro" id="IPR038071">
    <property type="entry name" value="UROD/MetE-like_sf"/>
</dbReference>
<dbReference type="NCBIfam" id="TIGR01371">
    <property type="entry name" value="met_syn_B12ind"/>
    <property type="match status" value="1"/>
</dbReference>
<dbReference type="NCBIfam" id="NF003556">
    <property type="entry name" value="PRK05222.1"/>
    <property type="match status" value="1"/>
</dbReference>
<dbReference type="PANTHER" id="PTHR30519">
    <property type="entry name" value="5-METHYLTETRAHYDROPTEROYLTRIGLUTAMATE--HOMOCYSTEINE METHYLTRANSFERASE"/>
    <property type="match status" value="1"/>
</dbReference>
<dbReference type="Pfam" id="PF08267">
    <property type="entry name" value="Meth_synt_1"/>
    <property type="match status" value="1"/>
</dbReference>
<dbReference type="Pfam" id="PF01717">
    <property type="entry name" value="Meth_synt_2"/>
    <property type="match status" value="1"/>
</dbReference>
<dbReference type="PIRSF" id="PIRSF000382">
    <property type="entry name" value="MeTrfase_B12_ind"/>
    <property type="match status" value="1"/>
</dbReference>
<dbReference type="SUPFAM" id="SSF51726">
    <property type="entry name" value="UROD/MetE-like"/>
    <property type="match status" value="2"/>
</dbReference>
<organism>
    <name type="scientific">Nitrosococcus oceani (strain ATCC 19707 / BCRC 17464 / JCM 30415 / NCIMB 11848 / C-107)</name>
    <dbReference type="NCBI Taxonomy" id="323261"/>
    <lineage>
        <taxon>Bacteria</taxon>
        <taxon>Pseudomonadati</taxon>
        <taxon>Pseudomonadota</taxon>
        <taxon>Gammaproteobacteria</taxon>
        <taxon>Chromatiales</taxon>
        <taxon>Chromatiaceae</taxon>
        <taxon>Nitrosococcus</taxon>
    </lineage>
</organism>
<gene>
    <name evidence="1" type="primary">metE</name>
    <name type="ordered locus">Noc_1739</name>
</gene>
<reference key="1">
    <citation type="journal article" date="2006" name="Appl. Environ. Microbiol.">
        <title>Complete genome sequence of the marine, chemolithoautotrophic, ammonia-oxidizing bacterium Nitrosococcus oceani ATCC 19707.</title>
        <authorList>
            <person name="Klotz M.G."/>
            <person name="Arp D.J."/>
            <person name="Chain P.S.G."/>
            <person name="El-Sheikh A.F."/>
            <person name="Hauser L.J."/>
            <person name="Hommes N.G."/>
            <person name="Larimer F.W."/>
            <person name="Malfatti S.A."/>
            <person name="Norton J.M."/>
            <person name="Poret-Peterson A.T."/>
            <person name="Vergez L.M."/>
            <person name="Ward B.B."/>
        </authorList>
    </citation>
    <scope>NUCLEOTIDE SEQUENCE [LARGE SCALE GENOMIC DNA]</scope>
    <source>
        <strain>ATCC 19707 / BCRC 17464 / JCM 30415 / NCIMB 11848 / C-107</strain>
    </source>
</reference>
<name>METE_NITOC</name>
<accession>Q3JAD5</accession>
<evidence type="ECO:0000255" key="1">
    <source>
        <dbReference type="HAMAP-Rule" id="MF_00172"/>
    </source>
</evidence>